<comment type="function">
    <text evidence="1 4 5">Promotes cell proliferation (PubMed:14551215). Plays a role in tooth germ growth (PubMed:30426815). Plays a role in the control of enamel mineralization. Binds the AMBN promoter (By similarity).</text>
</comment>
<comment type="subcellular location">
    <subcellularLocation>
        <location evidence="4">Nucleus</location>
    </subcellularLocation>
</comment>
<comment type="tissue specificity">
    <text evidence="4">Ubiquitous. Preferentially expressed by proliferating epithelial cells of teeth, hair follicles and limbs.</text>
</comment>
<comment type="domain">
    <text evidence="1">The 9aaTAD motif is a transactivation domain present in a large number of yeast and animal transcription factors.</text>
</comment>
<comment type="disruption phenotype">
    <text evidence="5">Develops fewer, smaller, incisors at 3 months of age in a transcription factor ASCL5/AmeloD knockout background (PubMed:30426815). Epithelial cell invasion is inhibited and CDH1/E-cadherin ectopically expressed in dental epithelial cells at 3 months of age, in an ASCL5 knockout background (PubMed:30426815).</text>
</comment>
<comment type="similarity">
    <text evidence="6">Belongs to the Sp1 C2H2-type zinc-finger protein family.</text>
</comment>
<sequence>MLTAVCGSLGSQHTDAPHASPPRLDLQPLQTYQGHTSPEAGDYPSPLQPGELQSLPLGPEVDFSQGYELPGASSRVTCEDLESDSPLAPGPFSKLLQPDMSHHYESWFRPTHPGTEDGSWWDLHPGTSWMDLPHTQGALTSPGHPGALQPALGGYVGDHQLCAPPPHPHPHHLLPAAGGQHLLGPPDGAKALEAAAQESQGLDSSLDAASRPKGSRRSVPRSSGQTVCRCPNCLEAERLGAPCGPDGGKKKHLHNCHIPGCGKAYAKTSHLKAHLRWHSGDRPFVCNWLFCGKRFTRSDELQRHLQTHTGTKKFPCAVCSRVFMRSDHLAKHMKTHEGAKEEAAAAAQGEGKAGGVVEPPGGKGKREAEGSSASSN</sequence>
<keyword id="KW-0238">DNA-binding</keyword>
<keyword id="KW-0479">Metal-binding</keyword>
<keyword id="KW-0539">Nucleus</keyword>
<keyword id="KW-1185">Reference proteome</keyword>
<keyword id="KW-0677">Repeat</keyword>
<keyword id="KW-0804">Transcription</keyword>
<keyword id="KW-0805">Transcription regulation</keyword>
<keyword id="KW-0862">Zinc</keyword>
<keyword id="KW-0863">Zinc-finger</keyword>
<protein>
    <recommendedName>
        <fullName>Transcription factor Sp6</fullName>
    </recommendedName>
    <alternativeName>
        <fullName>Epiprofin</fullName>
    </alternativeName>
    <alternativeName>
        <fullName>Krueppel-like factor 14</fullName>
    </alternativeName>
</protein>
<accession>Q9ESX2</accession>
<accession>Q6VM22</accession>
<dbReference type="EMBL" id="AY338955">
    <property type="protein sequence ID" value="AAR01258.1"/>
    <property type="molecule type" value="mRNA"/>
</dbReference>
<dbReference type="EMBL" id="AJ275988">
    <property type="protein sequence ID" value="CAC06698.1"/>
    <property type="molecule type" value="mRNA"/>
</dbReference>
<dbReference type="CCDS" id="CCDS25309.1"/>
<dbReference type="RefSeq" id="NP_001350159.1">
    <property type="nucleotide sequence ID" value="NM_001363230.1"/>
</dbReference>
<dbReference type="RefSeq" id="NP_112460.1">
    <property type="nucleotide sequence ID" value="NM_031183.3"/>
</dbReference>
<dbReference type="RefSeq" id="XP_006534594.1">
    <property type="nucleotide sequence ID" value="XM_006534531.3"/>
</dbReference>
<dbReference type="FunCoup" id="Q9ESX2">
    <property type="interactions" value="892"/>
</dbReference>
<dbReference type="STRING" id="10090.ENSMUSP00000103248"/>
<dbReference type="iPTMnet" id="Q9ESX2"/>
<dbReference type="PhosphoSitePlus" id="Q9ESX2"/>
<dbReference type="PaxDb" id="10090-ENSMUSP00000039307"/>
<dbReference type="ProteomicsDB" id="257290"/>
<dbReference type="Antibodypedia" id="30206">
    <property type="antibodies" value="164 antibodies from 24 providers"/>
</dbReference>
<dbReference type="DNASU" id="83395"/>
<dbReference type="Ensembl" id="ENSMUST00000047997.8">
    <property type="protein sequence ID" value="ENSMUSP00000039307.8"/>
    <property type="gene ID" value="ENSMUSG00000038560.8"/>
</dbReference>
<dbReference type="Ensembl" id="ENSMUST00000107622.2">
    <property type="protein sequence ID" value="ENSMUSP00000103248.2"/>
    <property type="gene ID" value="ENSMUSG00000038560.8"/>
</dbReference>
<dbReference type="GeneID" id="83395"/>
<dbReference type="KEGG" id="mmu:83395"/>
<dbReference type="UCSC" id="uc007ldh.2">
    <property type="organism name" value="mouse"/>
</dbReference>
<dbReference type="AGR" id="MGI:1932575"/>
<dbReference type="CTD" id="80320"/>
<dbReference type="MGI" id="MGI:1932575">
    <property type="gene designation" value="Sp6"/>
</dbReference>
<dbReference type="VEuPathDB" id="HostDB:ENSMUSG00000038560"/>
<dbReference type="eggNOG" id="KOG1721">
    <property type="taxonomic scope" value="Eukaryota"/>
</dbReference>
<dbReference type="GeneTree" id="ENSGT00940000161498"/>
<dbReference type="HOGENOM" id="CLU_019484_0_0_1"/>
<dbReference type="InParanoid" id="Q9ESX2"/>
<dbReference type="OMA" id="HGPPRLE"/>
<dbReference type="OrthoDB" id="6365676at2759"/>
<dbReference type="PhylomeDB" id="Q9ESX2"/>
<dbReference type="TreeFam" id="TF315506"/>
<dbReference type="BioGRID-ORCS" id="83395">
    <property type="hits" value="2 hits in 76 CRISPR screens"/>
</dbReference>
<dbReference type="ChiTaRS" id="Sp6">
    <property type="organism name" value="mouse"/>
</dbReference>
<dbReference type="PRO" id="PR:Q9ESX2"/>
<dbReference type="Proteomes" id="UP000000589">
    <property type="component" value="Chromosome 11"/>
</dbReference>
<dbReference type="RNAct" id="Q9ESX2">
    <property type="molecule type" value="protein"/>
</dbReference>
<dbReference type="Bgee" id="ENSMUSG00000038560">
    <property type="expression patterns" value="Expressed in calcareous tooth and 112 other cell types or tissues"/>
</dbReference>
<dbReference type="ExpressionAtlas" id="Q9ESX2">
    <property type="expression patterns" value="baseline and differential"/>
</dbReference>
<dbReference type="GO" id="GO:0005829">
    <property type="term" value="C:cytosol"/>
    <property type="evidence" value="ECO:0007669"/>
    <property type="project" value="Ensembl"/>
</dbReference>
<dbReference type="GO" id="GO:0005634">
    <property type="term" value="C:nucleus"/>
    <property type="evidence" value="ECO:0000314"/>
    <property type="project" value="MGI"/>
</dbReference>
<dbReference type="GO" id="GO:0003677">
    <property type="term" value="F:DNA binding"/>
    <property type="evidence" value="ECO:0000250"/>
    <property type="project" value="MGI"/>
</dbReference>
<dbReference type="GO" id="GO:0008270">
    <property type="term" value="F:zinc ion binding"/>
    <property type="evidence" value="ECO:0007669"/>
    <property type="project" value="UniProtKB-KW"/>
</dbReference>
<dbReference type="GO" id="GO:0001837">
    <property type="term" value="P:epithelial to mesenchymal transition"/>
    <property type="evidence" value="ECO:0000315"/>
    <property type="project" value="UniProtKB"/>
</dbReference>
<dbReference type="GO" id="GO:0042476">
    <property type="term" value="P:odontogenesis"/>
    <property type="evidence" value="ECO:0000315"/>
    <property type="project" value="UniProtKB"/>
</dbReference>
<dbReference type="GO" id="GO:0008284">
    <property type="term" value="P:positive regulation of cell population proliferation"/>
    <property type="evidence" value="ECO:0000314"/>
    <property type="project" value="MGI"/>
</dbReference>
<dbReference type="GO" id="GO:0042481">
    <property type="term" value="P:regulation of odontogenesis"/>
    <property type="evidence" value="ECO:0000315"/>
    <property type="project" value="MGI"/>
</dbReference>
<dbReference type="GO" id="GO:0006366">
    <property type="term" value="P:transcription by RNA polymerase II"/>
    <property type="evidence" value="ECO:0000250"/>
    <property type="project" value="MGI"/>
</dbReference>
<dbReference type="CDD" id="cd22544">
    <property type="entry name" value="SP6_N"/>
    <property type="match status" value="1"/>
</dbReference>
<dbReference type="FunFam" id="3.30.160.60:FF:001147">
    <property type="entry name" value="Sp6 transcription factor"/>
    <property type="match status" value="1"/>
</dbReference>
<dbReference type="FunFam" id="3.30.160.60:FF:000077">
    <property type="entry name" value="Sp8 transcription factor"/>
    <property type="match status" value="1"/>
</dbReference>
<dbReference type="FunFam" id="3.30.160.60:FF:000014">
    <property type="entry name" value="Transcription factor Sp3"/>
    <property type="match status" value="1"/>
</dbReference>
<dbReference type="Gene3D" id="3.30.160.60">
    <property type="entry name" value="Classic Zinc Finger"/>
    <property type="match status" value="3"/>
</dbReference>
<dbReference type="InterPro" id="IPR036236">
    <property type="entry name" value="Znf_C2H2_sf"/>
</dbReference>
<dbReference type="InterPro" id="IPR013087">
    <property type="entry name" value="Znf_C2H2_type"/>
</dbReference>
<dbReference type="PANTHER" id="PTHR23235">
    <property type="entry name" value="KRUEPPEL-LIKE TRANSCRIPTION FACTOR"/>
    <property type="match status" value="1"/>
</dbReference>
<dbReference type="PANTHER" id="PTHR23235:SF23">
    <property type="entry name" value="TRANSCRIPTION FACTOR SP6"/>
    <property type="match status" value="1"/>
</dbReference>
<dbReference type="Pfam" id="PF00096">
    <property type="entry name" value="zf-C2H2"/>
    <property type="match status" value="3"/>
</dbReference>
<dbReference type="SMART" id="SM00355">
    <property type="entry name" value="ZnF_C2H2"/>
    <property type="match status" value="3"/>
</dbReference>
<dbReference type="SUPFAM" id="SSF57667">
    <property type="entry name" value="beta-beta-alpha zinc fingers"/>
    <property type="match status" value="2"/>
</dbReference>
<dbReference type="PROSITE" id="PS00028">
    <property type="entry name" value="ZINC_FINGER_C2H2_1"/>
    <property type="match status" value="3"/>
</dbReference>
<dbReference type="PROSITE" id="PS50157">
    <property type="entry name" value="ZINC_FINGER_C2H2_2"/>
    <property type="match status" value="3"/>
</dbReference>
<proteinExistence type="evidence at transcript level"/>
<feature type="chain" id="PRO_0000047149" description="Transcription factor Sp6">
    <location>
        <begin position="1"/>
        <end position="376"/>
    </location>
</feature>
<feature type="zinc finger region" description="C2H2-type 1" evidence="2">
    <location>
        <begin position="254"/>
        <end position="278"/>
    </location>
</feature>
<feature type="zinc finger region" description="C2H2-type 2" evidence="2">
    <location>
        <begin position="284"/>
        <end position="308"/>
    </location>
</feature>
<feature type="zinc finger region" description="C2H2-type 3" evidence="2">
    <location>
        <begin position="314"/>
        <end position="336"/>
    </location>
</feature>
<feature type="region of interest" description="Disordered" evidence="3">
    <location>
        <begin position="1"/>
        <end position="70"/>
    </location>
</feature>
<feature type="region of interest" description="Disordered" evidence="3">
    <location>
        <begin position="164"/>
        <end position="224"/>
    </location>
</feature>
<feature type="region of interest" description="Disordered" evidence="3">
    <location>
        <begin position="334"/>
        <end position="376"/>
    </location>
</feature>
<feature type="short sequence motif" description="9aaTAD" evidence="1">
    <location>
        <begin position="118"/>
        <end position="126"/>
    </location>
</feature>
<feature type="compositionally biased region" description="Basic and acidic residues" evidence="3">
    <location>
        <begin position="334"/>
        <end position="343"/>
    </location>
</feature>
<feature type="compositionally biased region" description="Low complexity" evidence="3">
    <location>
        <begin position="344"/>
        <end position="360"/>
    </location>
</feature>
<reference key="1">
    <citation type="journal article" date="2004" name="J. Biol. Chem.">
        <title>The Kruppel-like factor epiprofin is expressed by epithelium of developing teeth, hair follicles, and limb buds and promotes cell proliferation.</title>
        <authorList>
            <person name="Nakamura T."/>
            <person name="Unda F."/>
            <person name="De-Vega S."/>
            <person name="Vilaxa A."/>
            <person name="Fukumoto S."/>
            <person name="Yamada K.M."/>
            <person name="Yamada Y."/>
        </authorList>
    </citation>
    <scope>NUCLEOTIDE SEQUENCE [MRNA]</scope>
    <scope>FUNCTION</scope>
    <scope>SUBCELLULAR LOCATION</scope>
    <scope>TISSUE SPECIFICITY</scope>
    <source>
        <strain>ICR</strain>
    </source>
</reference>
<reference key="2">
    <citation type="journal article" date="2000" name="Genomics">
        <title>Identification of KLF13 and KLF14 (SP6), novel members of the SP/XKLF transcription factor family.</title>
        <authorList>
            <person name="Scohy S."/>
            <person name="Gabant P."/>
            <person name="Van Reeth T."/>
            <person name="Hertveldt V."/>
            <person name="Dreze P.-L."/>
            <person name="Van Vooren P."/>
            <person name="Riviere M."/>
            <person name="Szpirer J."/>
            <person name="Szpirer C."/>
        </authorList>
    </citation>
    <scope>NUCLEOTIDE SEQUENCE [MRNA] OF 225-376</scope>
</reference>
<reference evidence="7" key="3">
    <citation type="journal article" date="2009" name="PLoS Biol.">
        <title>Lineage-specific biology revealed by a finished genome assembly of the mouse.</title>
        <authorList>
            <person name="Church D.M."/>
            <person name="Goodstadt L."/>
            <person name="Hillier L.W."/>
            <person name="Zody M.C."/>
            <person name="Goldstein S."/>
            <person name="She X."/>
            <person name="Bult C.J."/>
            <person name="Agarwala R."/>
            <person name="Cherry J.L."/>
            <person name="DiCuccio M."/>
            <person name="Hlavina W."/>
            <person name="Kapustin Y."/>
            <person name="Meric P."/>
            <person name="Maglott D."/>
            <person name="Birtle Z."/>
            <person name="Marques A.C."/>
            <person name="Graves T."/>
            <person name="Zhou S."/>
            <person name="Teague B."/>
            <person name="Potamousis K."/>
            <person name="Churas C."/>
            <person name="Place M."/>
            <person name="Herschleb J."/>
            <person name="Runnheim R."/>
            <person name="Forrest D."/>
            <person name="Amos-Landgraf J."/>
            <person name="Schwartz D.C."/>
            <person name="Cheng Z."/>
            <person name="Lindblad-Toh K."/>
            <person name="Eichler E.E."/>
            <person name="Ponting C.P."/>
        </authorList>
    </citation>
    <scope>NUCLEOTIDE SEQUENCE [LARGE SCALE GENOMIC DNA]</scope>
    <source>
        <strain evidence="7">C57BL/6J</strain>
    </source>
</reference>
<reference evidence="6" key="4">
    <citation type="journal article" date="2019" name="J. Dent. Res.">
        <title>Identification of the Novel Tooth-Specific Transcription Factor AmeloD.</title>
        <authorList>
            <person name="He B."/>
            <person name="Chiba Y."/>
            <person name="Li H."/>
            <person name="de Vega S."/>
            <person name="Tanaka K."/>
            <person name="Yoshizaki K."/>
            <person name="Ishijima M."/>
            <person name="Yuasa K."/>
            <person name="Ishikawa M."/>
            <person name="Rhodes C."/>
            <person name="Sakai K."/>
            <person name="Zhang P."/>
            <person name="Fukumoto S."/>
            <person name="Zhou X."/>
            <person name="Yamada Y."/>
        </authorList>
    </citation>
    <scope>FUNCTION</scope>
    <scope>DISRUPTION PHENOTYPE</scope>
</reference>
<evidence type="ECO:0000250" key="1">
    <source>
        <dbReference type="UniProtKB" id="Q3SY56"/>
    </source>
</evidence>
<evidence type="ECO:0000255" key="2">
    <source>
        <dbReference type="PROSITE-ProRule" id="PRU00042"/>
    </source>
</evidence>
<evidence type="ECO:0000256" key="3">
    <source>
        <dbReference type="SAM" id="MobiDB-lite"/>
    </source>
</evidence>
<evidence type="ECO:0000269" key="4">
    <source>
    </source>
</evidence>
<evidence type="ECO:0000269" key="5">
    <source>
    </source>
</evidence>
<evidence type="ECO:0000305" key="6"/>
<evidence type="ECO:0000312" key="7">
    <source>
        <dbReference type="Proteomes" id="UP000000589"/>
    </source>
</evidence>
<name>SP6_MOUSE</name>
<gene>
    <name type="primary">Sp6</name>
    <name type="synonym">Epfn</name>
    <name type="synonym">Klf14</name>
</gene>
<organism>
    <name type="scientific">Mus musculus</name>
    <name type="common">Mouse</name>
    <dbReference type="NCBI Taxonomy" id="10090"/>
    <lineage>
        <taxon>Eukaryota</taxon>
        <taxon>Metazoa</taxon>
        <taxon>Chordata</taxon>
        <taxon>Craniata</taxon>
        <taxon>Vertebrata</taxon>
        <taxon>Euteleostomi</taxon>
        <taxon>Mammalia</taxon>
        <taxon>Eutheria</taxon>
        <taxon>Euarchontoglires</taxon>
        <taxon>Glires</taxon>
        <taxon>Rodentia</taxon>
        <taxon>Myomorpha</taxon>
        <taxon>Muroidea</taxon>
        <taxon>Muridae</taxon>
        <taxon>Murinae</taxon>
        <taxon>Mus</taxon>
        <taxon>Mus</taxon>
    </lineage>
</organism>